<protein>
    <recommendedName>
        <fullName evidence="1">Lipoyl synthase</fullName>
        <ecNumber evidence="1">2.8.1.8</ecNumber>
    </recommendedName>
    <alternativeName>
        <fullName evidence="1">Lip-syn</fullName>
        <shortName evidence="1">LS</shortName>
    </alternativeName>
    <alternativeName>
        <fullName evidence="1">Lipoate synthase</fullName>
    </alternativeName>
    <alternativeName>
        <fullName evidence="1">Lipoic acid synthase</fullName>
    </alternativeName>
    <alternativeName>
        <fullName evidence="1">Sulfur insertion protein LipA</fullName>
    </alternativeName>
</protein>
<sequence length="373" mass="41085">MTQPIVRSIPLHVVSNDHPSSSPLQPGVKQSGEDKIGRSPVQFADVPVLRKPSWIRVRIPSGNAVQSLKAKLRENRLVTVCEEAACPNIHECFSHGTATFMILGEVCTRRCSFCDVAHGRPKPPDPEEPISLARTVAEMGLKYVVVTSVDRDDLRDGGAQHFVDCIAAIRQSAPQTRIEILTPDFRGKGRMDRALDILAACPPDVFNHNVETVPALYPNVRPGADYQWSLTLLKRFKAQHPQVPTKSGIMLGLGETLDQVQATLRDLRAHDVDMVTVGQYLQPTSHHHPVLRYWTPDEYKALEEYGMALGFSHVASGPMVRSSYHADHQAKEAGLGFNATVSLGSPAVSSTEHRERHTIASKSASKTESIPHR</sequence>
<keyword id="KW-0004">4Fe-4S</keyword>
<keyword id="KW-0963">Cytoplasm</keyword>
<keyword id="KW-0408">Iron</keyword>
<keyword id="KW-0411">Iron-sulfur</keyword>
<keyword id="KW-0479">Metal-binding</keyword>
<keyword id="KW-0949">S-adenosyl-L-methionine</keyword>
<keyword id="KW-0808">Transferase</keyword>
<proteinExistence type="inferred from homology"/>
<gene>
    <name evidence="1" type="primary">lipA</name>
    <name type="ordered locus">Xfasm12_0599</name>
</gene>
<organism>
    <name type="scientific">Xylella fastidiosa (strain M12)</name>
    <dbReference type="NCBI Taxonomy" id="405440"/>
    <lineage>
        <taxon>Bacteria</taxon>
        <taxon>Pseudomonadati</taxon>
        <taxon>Pseudomonadota</taxon>
        <taxon>Gammaproteobacteria</taxon>
        <taxon>Lysobacterales</taxon>
        <taxon>Lysobacteraceae</taxon>
        <taxon>Xylella</taxon>
    </lineage>
</organism>
<dbReference type="EC" id="2.8.1.8" evidence="1"/>
<dbReference type="EMBL" id="CP000941">
    <property type="protein sequence ID" value="ACA11603.1"/>
    <property type="molecule type" value="Genomic_DNA"/>
</dbReference>
<dbReference type="RefSeq" id="WP_004084037.1">
    <property type="nucleotide sequence ID" value="NC_010513.1"/>
</dbReference>
<dbReference type="SMR" id="B0U641"/>
<dbReference type="KEGG" id="xfm:Xfasm12_0599"/>
<dbReference type="HOGENOM" id="CLU_033144_2_1_6"/>
<dbReference type="UniPathway" id="UPA00538">
    <property type="reaction ID" value="UER00593"/>
</dbReference>
<dbReference type="GO" id="GO:0005737">
    <property type="term" value="C:cytoplasm"/>
    <property type="evidence" value="ECO:0007669"/>
    <property type="project" value="UniProtKB-SubCell"/>
</dbReference>
<dbReference type="GO" id="GO:0051539">
    <property type="term" value="F:4 iron, 4 sulfur cluster binding"/>
    <property type="evidence" value="ECO:0007669"/>
    <property type="project" value="UniProtKB-UniRule"/>
</dbReference>
<dbReference type="GO" id="GO:0016992">
    <property type="term" value="F:lipoate synthase activity"/>
    <property type="evidence" value="ECO:0007669"/>
    <property type="project" value="UniProtKB-UniRule"/>
</dbReference>
<dbReference type="GO" id="GO:0046872">
    <property type="term" value="F:metal ion binding"/>
    <property type="evidence" value="ECO:0007669"/>
    <property type="project" value="UniProtKB-KW"/>
</dbReference>
<dbReference type="CDD" id="cd01335">
    <property type="entry name" value="Radical_SAM"/>
    <property type="match status" value="1"/>
</dbReference>
<dbReference type="FunFam" id="3.20.20.70:FF:000023">
    <property type="entry name" value="Lipoyl synthase"/>
    <property type="match status" value="1"/>
</dbReference>
<dbReference type="Gene3D" id="3.20.20.70">
    <property type="entry name" value="Aldolase class I"/>
    <property type="match status" value="1"/>
</dbReference>
<dbReference type="HAMAP" id="MF_00206">
    <property type="entry name" value="Lipoyl_synth"/>
    <property type="match status" value="1"/>
</dbReference>
<dbReference type="InterPro" id="IPR013785">
    <property type="entry name" value="Aldolase_TIM"/>
</dbReference>
<dbReference type="InterPro" id="IPR006638">
    <property type="entry name" value="Elp3/MiaA/NifB-like_rSAM"/>
</dbReference>
<dbReference type="InterPro" id="IPR031691">
    <property type="entry name" value="LIAS_N"/>
</dbReference>
<dbReference type="InterPro" id="IPR003698">
    <property type="entry name" value="Lipoyl_synth"/>
</dbReference>
<dbReference type="InterPro" id="IPR007197">
    <property type="entry name" value="rSAM"/>
</dbReference>
<dbReference type="NCBIfam" id="TIGR00510">
    <property type="entry name" value="lipA"/>
    <property type="match status" value="1"/>
</dbReference>
<dbReference type="NCBIfam" id="NF004019">
    <property type="entry name" value="PRK05481.1"/>
    <property type="match status" value="1"/>
</dbReference>
<dbReference type="NCBIfam" id="NF009544">
    <property type="entry name" value="PRK12928.1"/>
    <property type="match status" value="1"/>
</dbReference>
<dbReference type="PANTHER" id="PTHR10949">
    <property type="entry name" value="LIPOYL SYNTHASE"/>
    <property type="match status" value="1"/>
</dbReference>
<dbReference type="PANTHER" id="PTHR10949:SF0">
    <property type="entry name" value="LIPOYL SYNTHASE, MITOCHONDRIAL"/>
    <property type="match status" value="1"/>
</dbReference>
<dbReference type="Pfam" id="PF16881">
    <property type="entry name" value="LIAS_N"/>
    <property type="match status" value="1"/>
</dbReference>
<dbReference type="Pfam" id="PF04055">
    <property type="entry name" value="Radical_SAM"/>
    <property type="match status" value="1"/>
</dbReference>
<dbReference type="PIRSF" id="PIRSF005963">
    <property type="entry name" value="Lipoyl_synth"/>
    <property type="match status" value="1"/>
</dbReference>
<dbReference type="SFLD" id="SFLDF00271">
    <property type="entry name" value="lipoyl_synthase"/>
    <property type="match status" value="1"/>
</dbReference>
<dbReference type="SFLD" id="SFLDG01058">
    <property type="entry name" value="lipoyl_synthase_like"/>
    <property type="match status" value="1"/>
</dbReference>
<dbReference type="SMART" id="SM00729">
    <property type="entry name" value="Elp3"/>
    <property type="match status" value="1"/>
</dbReference>
<dbReference type="SUPFAM" id="SSF102114">
    <property type="entry name" value="Radical SAM enzymes"/>
    <property type="match status" value="1"/>
</dbReference>
<dbReference type="PROSITE" id="PS51918">
    <property type="entry name" value="RADICAL_SAM"/>
    <property type="match status" value="1"/>
</dbReference>
<accession>B0U641</accession>
<comment type="function">
    <text evidence="1">Catalyzes the radical-mediated insertion of two sulfur atoms into the C-6 and C-8 positions of the octanoyl moiety bound to the lipoyl domains of lipoate-dependent enzymes, thereby converting the octanoylated domains into lipoylated derivatives.</text>
</comment>
<comment type="catalytic activity">
    <reaction evidence="1">
        <text>[[Fe-S] cluster scaffold protein carrying a second [4Fe-4S](2+) cluster] + N(6)-octanoyl-L-lysyl-[protein] + 2 oxidized [2Fe-2S]-[ferredoxin] + 2 S-adenosyl-L-methionine + 4 H(+) = [[Fe-S] cluster scaffold protein] + N(6)-[(R)-dihydrolipoyl]-L-lysyl-[protein] + 4 Fe(3+) + 2 hydrogen sulfide + 2 5'-deoxyadenosine + 2 L-methionine + 2 reduced [2Fe-2S]-[ferredoxin]</text>
        <dbReference type="Rhea" id="RHEA:16585"/>
        <dbReference type="Rhea" id="RHEA-COMP:9928"/>
        <dbReference type="Rhea" id="RHEA-COMP:10000"/>
        <dbReference type="Rhea" id="RHEA-COMP:10001"/>
        <dbReference type="Rhea" id="RHEA-COMP:10475"/>
        <dbReference type="Rhea" id="RHEA-COMP:14568"/>
        <dbReference type="Rhea" id="RHEA-COMP:14569"/>
        <dbReference type="ChEBI" id="CHEBI:15378"/>
        <dbReference type="ChEBI" id="CHEBI:17319"/>
        <dbReference type="ChEBI" id="CHEBI:29034"/>
        <dbReference type="ChEBI" id="CHEBI:29919"/>
        <dbReference type="ChEBI" id="CHEBI:33722"/>
        <dbReference type="ChEBI" id="CHEBI:33737"/>
        <dbReference type="ChEBI" id="CHEBI:33738"/>
        <dbReference type="ChEBI" id="CHEBI:57844"/>
        <dbReference type="ChEBI" id="CHEBI:59789"/>
        <dbReference type="ChEBI" id="CHEBI:78809"/>
        <dbReference type="ChEBI" id="CHEBI:83100"/>
        <dbReference type="EC" id="2.8.1.8"/>
    </reaction>
</comment>
<comment type="cofactor">
    <cofactor evidence="1">
        <name>[4Fe-4S] cluster</name>
        <dbReference type="ChEBI" id="CHEBI:49883"/>
    </cofactor>
    <text evidence="1">Binds 2 [4Fe-4S] clusters per subunit. One cluster is coordinated with 3 cysteines and an exchangeable S-adenosyl-L-methionine.</text>
</comment>
<comment type="pathway">
    <text evidence="1">Protein modification; protein lipoylation via endogenous pathway; protein N(6)-(lipoyl)lysine from octanoyl-[acyl-carrier-protein]: step 2/2.</text>
</comment>
<comment type="subcellular location">
    <subcellularLocation>
        <location evidence="1">Cytoplasm</location>
    </subcellularLocation>
</comment>
<comment type="similarity">
    <text evidence="1">Belongs to the radical SAM superfamily. Lipoyl synthase family.</text>
</comment>
<name>LIPA_XYLFM</name>
<reference key="1">
    <citation type="journal article" date="2010" name="J. Bacteriol.">
        <title>Whole genome sequences of two Xylella fastidiosa strains (M12 and M23) causing almond leaf scorch disease in California.</title>
        <authorList>
            <person name="Chen J."/>
            <person name="Xie G."/>
            <person name="Han S."/>
            <person name="Chertkov O."/>
            <person name="Sims D."/>
            <person name="Civerolo E.L."/>
        </authorList>
    </citation>
    <scope>NUCLEOTIDE SEQUENCE [LARGE SCALE GENOMIC DNA]</scope>
    <source>
        <strain>M12</strain>
    </source>
</reference>
<feature type="chain" id="PRO_1000099645" description="Lipoyl synthase">
    <location>
        <begin position="1"/>
        <end position="373"/>
    </location>
</feature>
<feature type="domain" description="Radical SAM core" evidence="2">
    <location>
        <begin position="93"/>
        <end position="312"/>
    </location>
</feature>
<feature type="region of interest" description="Disordered" evidence="3">
    <location>
        <begin position="12"/>
        <end position="36"/>
    </location>
</feature>
<feature type="region of interest" description="Disordered" evidence="3">
    <location>
        <begin position="346"/>
        <end position="373"/>
    </location>
</feature>
<feature type="compositionally biased region" description="Polar residues" evidence="3">
    <location>
        <begin position="360"/>
        <end position="373"/>
    </location>
</feature>
<feature type="binding site" evidence="1">
    <location>
        <position position="81"/>
    </location>
    <ligand>
        <name>[4Fe-4S] cluster</name>
        <dbReference type="ChEBI" id="CHEBI:49883"/>
        <label>1</label>
    </ligand>
</feature>
<feature type="binding site" evidence="1">
    <location>
        <position position="86"/>
    </location>
    <ligand>
        <name>[4Fe-4S] cluster</name>
        <dbReference type="ChEBI" id="CHEBI:49883"/>
        <label>1</label>
    </ligand>
</feature>
<feature type="binding site" evidence="1">
    <location>
        <position position="92"/>
    </location>
    <ligand>
        <name>[4Fe-4S] cluster</name>
        <dbReference type="ChEBI" id="CHEBI:49883"/>
        <label>1</label>
    </ligand>
</feature>
<feature type="binding site" evidence="1">
    <location>
        <position position="107"/>
    </location>
    <ligand>
        <name>[4Fe-4S] cluster</name>
        <dbReference type="ChEBI" id="CHEBI:49883"/>
        <label>2</label>
        <note>4Fe-4S-S-AdoMet</note>
    </ligand>
</feature>
<feature type="binding site" evidence="1">
    <location>
        <position position="111"/>
    </location>
    <ligand>
        <name>[4Fe-4S] cluster</name>
        <dbReference type="ChEBI" id="CHEBI:49883"/>
        <label>2</label>
        <note>4Fe-4S-S-AdoMet</note>
    </ligand>
</feature>
<feature type="binding site" evidence="1">
    <location>
        <position position="114"/>
    </location>
    <ligand>
        <name>[4Fe-4S] cluster</name>
        <dbReference type="ChEBI" id="CHEBI:49883"/>
        <label>2</label>
        <note>4Fe-4S-S-AdoMet</note>
    </ligand>
</feature>
<feature type="binding site" evidence="1">
    <location>
        <position position="323"/>
    </location>
    <ligand>
        <name>[4Fe-4S] cluster</name>
        <dbReference type="ChEBI" id="CHEBI:49883"/>
        <label>1</label>
    </ligand>
</feature>
<evidence type="ECO:0000255" key="1">
    <source>
        <dbReference type="HAMAP-Rule" id="MF_00206"/>
    </source>
</evidence>
<evidence type="ECO:0000255" key="2">
    <source>
        <dbReference type="PROSITE-ProRule" id="PRU01266"/>
    </source>
</evidence>
<evidence type="ECO:0000256" key="3">
    <source>
        <dbReference type="SAM" id="MobiDB-lite"/>
    </source>
</evidence>